<feature type="chain" id="PRO_0000074292" description="Cyclic dof factor 2">
    <location>
        <begin position="1"/>
        <end position="457"/>
    </location>
</feature>
<feature type="zinc finger region" description="Dof-type" evidence="2">
    <location>
        <begin position="138"/>
        <end position="192"/>
    </location>
</feature>
<feature type="region of interest" description="Disordered" evidence="3">
    <location>
        <begin position="1"/>
        <end position="130"/>
    </location>
</feature>
<feature type="region of interest" description="Disordered" evidence="3">
    <location>
        <begin position="334"/>
        <end position="377"/>
    </location>
</feature>
<feature type="region of interest" description="Disordered" evidence="3">
    <location>
        <begin position="417"/>
        <end position="457"/>
    </location>
</feature>
<feature type="compositionally biased region" description="Polar residues" evidence="3">
    <location>
        <begin position="22"/>
        <end position="35"/>
    </location>
</feature>
<feature type="compositionally biased region" description="Acidic residues" evidence="3">
    <location>
        <begin position="45"/>
        <end position="54"/>
    </location>
</feature>
<feature type="compositionally biased region" description="Acidic residues" evidence="3">
    <location>
        <begin position="62"/>
        <end position="73"/>
    </location>
</feature>
<feature type="compositionally biased region" description="Basic and acidic residues" evidence="3">
    <location>
        <begin position="74"/>
        <end position="94"/>
    </location>
</feature>
<feature type="compositionally biased region" description="Basic and acidic residues" evidence="3">
    <location>
        <begin position="106"/>
        <end position="118"/>
    </location>
</feature>
<feature type="compositionally biased region" description="Low complexity" evidence="3">
    <location>
        <begin position="337"/>
        <end position="346"/>
    </location>
</feature>
<feature type="binding site" evidence="2">
    <location>
        <position position="140"/>
    </location>
    <ligand>
        <name>Zn(2+)</name>
        <dbReference type="ChEBI" id="CHEBI:29105"/>
    </ligand>
</feature>
<feature type="binding site" evidence="2">
    <location>
        <position position="143"/>
    </location>
    <ligand>
        <name>Zn(2+)</name>
        <dbReference type="ChEBI" id="CHEBI:29105"/>
    </ligand>
</feature>
<feature type="binding site" evidence="2">
    <location>
        <position position="165"/>
    </location>
    <ligand>
        <name>Zn(2+)</name>
        <dbReference type="ChEBI" id="CHEBI:29105"/>
    </ligand>
</feature>
<feature type="binding site" evidence="2">
    <location>
        <position position="168"/>
    </location>
    <ligand>
        <name>Zn(2+)</name>
        <dbReference type="ChEBI" id="CHEBI:29105"/>
    </ligand>
</feature>
<feature type="sequence conflict" description="In Ref. 3; AAL10495." evidence="6" ref="3">
    <original>G</original>
    <variation>R</variation>
    <location>
        <position position="277"/>
    </location>
</feature>
<evidence type="ECO:0000250" key="1"/>
<evidence type="ECO:0000255" key="2">
    <source>
        <dbReference type="PROSITE-ProRule" id="PRU00071"/>
    </source>
</evidence>
<evidence type="ECO:0000256" key="3">
    <source>
        <dbReference type="SAM" id="MobiDB-lite"/>
    </source>
</evidence>
<evidence type="ECO:0000269" key="4">
    <source>
    </source>
</evidence>
<evidence type="ECO:0000269" key="5">
    <source>
    </source>
</evidence>
<evidence type="ECO:0000305" key="6"/>
<dbReference type="EMBL" id="AB012243">
    <property type="protein sequence ID" value="BAB08898.1"/>
    <property type="status" value="ALT_SEQ"/>
    <property type="molecule type" value="Genomic_DNA"/>
</dbReference>
<dbReference type="EMBL" id="CP002688">
    <property type="protein sequence ID" value="AED94460.1"/>
    <property type="molecule type" value="Genomic_DNA"/>
</dbReference>
<dbReference type="EMBL" id="CP002688">
    <property type="protein sequence ID" value="AED94461.1"/>
    <property type="molecule type" value="Genomic_DNA"/>
</dbReference>
<dbReference type="EMBL" id="CP002688">
    <property type="protein sequence ID" value="ANM69712.1"/>
    <property type="molecule type" value="Genomic_DNA"/>
</dbReference>
<dbReference type="EMBL" id="AY056804">
    <property type="protein sequence ID" value="AAL10495.1"/>
    <property type="molecule type" value="mRNA"/>
</dbReference>
<dbReference type="EMBL" id="BT015791">
    <property type="protein sequence ID" value="AAU90081.1"/>
    <property type="molecule type" value="mRNA"/>
</dbReference>
<dbReference type="RefSeq" id="NP_001318708.1">
    <property type="nucleotide sequence ID" value="NM_001344299.1"/>
</dbReference>
<dbReference type="RefSeq" id="NP_568567.1">
    <property type="nucleotide sequence ID" value="NM_123328.2"/>
</dbReference>
<dbReference type="RefSeq" id="NP_851106.1">
    <property type="nucleotide sequence ID" value="NM_180775.3"/>
</dbReference>
<dbReference type="BioGRID" id="19213">
    <property type="interactions" value="16"/>
</dbReference>
<dbReference type="FunCoup" id="Q93ZL5">
    <property type="interactions" value="265"/>
</dbReference>
<dbReference type="IntAct" id="Q93ZL5">
    <property type="interactions" value="15"/>
</dbReference>
<dbReference type="STRING" id="3702.Q93ZL5"/>
<dbReference type="GlyGen" id="Q93ZL5">
    <property type="glycosylation" value="1 site"/>
</dbReference>
<dbReference type="PaxDb" id="3702-AT5G39660.1"/>
<dbReference type="ProteomicsDB" id="223969"/>
<dbReference type="EnsemblPlants" id="AT5G39660.1">
    <property type="protein sequence ID" value="AT5G39660.1"/>
    <property type="gene ID" value="AT5G39660"/>
</dbReference>
<dbReference type="EnsemblPlants" id="AT5G39660.2">
    <property type="protein sequence ID" value="AT5G39660.2"/>
    <property type="gene ID" value="AT5G39660"/>
</dbReference>
<dbReference type="EnsemblPlants" id="AT5G39660.3">
    <property type="protein sequence ID" value="AT5G39660.3"/>
    <property type="gene ID" value="AT5G39660"/>
</dbReference>
<dbReference type="GeneID" id="833962"/>
<dbReference type="Gramene" id="AT5G39660.1">
    <property type="protein sequence ID" value="AT5G39660.1"/>
    <property type="gene ID" value="AT5G39660"/>
</dbReference>
<dbReference type="Gramene" id="AT5G39660.2">
    <property type="protein sequence ID" value="AT5G39660.2"/>
    <property type="gene ID" value="AT5G39660"/>
</dbReference>
<dbReference type="Gramene" id="AT5G39660.3">
    <property type="protein sequence ID" value="AT5G39660.3"/>
    <property type="gene ID" value="AT5G39660"/>
</dbReference>
<dbReference type="KEGG" id="ath:AT5G39660"/>
<dbReference type="Araport" id="AT5G39660"/>
<dbReference type="TAIR" id="AT5G39660">
    <property type="gene designation" value="CDF2"/>
</dbReference>
<dbReference type="eggNOG" id="ENOG502QSI8">
    <property type="taxonomic scope" value="Eukaryota"/>
</dbReference>
<dbReference type="HOGENOM" id="CLU_030533_1_0_1"/>
<dbReference type="InParanoid" id="Q93ZL5"/>
<dbReference type="OMA" id="DACNHNN"/>
<dbReference type="PhylomeDB" id="Q93ZL5"/>
<dbReference type="PRO" id="PR:Q93ZL5"/>
<dbReference type="Proteomes" id="UP000006548">
    <property type="component" value="Chromosome 5"/>
</dbReference>
<dbReference type="ExpressionAtlas" id="Q93ZL5">
    <property type="expression patterns" value="baseline and differential"/>
</dbReference>
<dbReference type="GO" id="GO:0005634">
    <property type="term" value="C:nucleus"/>
    <property type="evidence" value="ECO:0007669"/>
    <property type="project" value="UniProtKB-SubCell"/>
</dbReference>
<dbReference type="GO" id="GO:0003700">
    <property type="term" value="F:DNA-binding transcription factor activity"/>
    <property type="evidence" value="ECO:0000250"/>
    <property type="project" value="TAIR"/>
</dbReference>
<dbReference type="GO" id="GO:0000976">
    <property type="term" value="F:transcription cis-regulatory region binding"/>
    <property type="evidence" value="ECO:0000353"/>
    <property type="project" value="TAIR"/>
</dbReference>
<dbReference type="GO" id="GO:0008270">
    <property type="term" value="F:zinc ion binding"/>
    <property type="evidence" value="ECO:0007669"/>
    <property type="project" value="UniProtKB-KW"/>
</dbReference>
<dbReference type="GO" id="GO:0009908">
    <property type="term" value="P:flower development"/>
    <property type="evidence" value="ECO:0007669"/>
    <property type="project" value="UniProtKB-KW"/>
</dbReference>
<dbReference type="GO" id="GO:0006355">
    <property type="term" value="P:regulation of DNA-templated transcription"/>
    <property type="evidence" value="ECO:0000304"/>
    <property type="project" value="TAIR"/>
</dbReference>
<dbReference type="InterPro" id="IPR045174">
    <property type="entry name" value="Dof"/>
</dbReference>
<dbReference type="InterPro" id="IPR003851">
    <property type="entry name" value="Znf_Dof"/>
</dbReference>
<dbReference type="PANTHER" id="PTHR31089">
    <property type="entry name" value="CYCLIC DOF FACTOR 2"/>
    <property type="match status" value="1"/>
</dbReference>
<dbReference type="PANTHER" id="PTHR31089:SF75">
    <property type="entry name" value="CYCLIC DOF FACTOR 2"/>
    <property type="match status" value="1"/>
</dbReference>
<dbReference type="Pfam" id="PF02701">
    <property type="entry name" value="Zn_ribbon_Dof"/>
    <property type="match status" value="1"/>
</dbReference>
<dbReference type="PROSITE" id="PS01361">
    <property type="entry name" value="ZF_DOF_1"/>
    <property type="match status" value="1"/>
</dbReference>
<dbReference type="PROSITE" id="PS50884">
    <property type="entry name" value="ZF_DOF_2"/>
    <property type="match status" value="1"/>
</dbReference>
<reference key="1">
    <citation type="journal article" date="1998" name="DNA Res.">
        <title>Structural analysis of Arabidopsis thaliana chromosome 5. VI. Sequence features of the regions of 1,367,185 bp covered by 19 physically assigned P1 and TAC clones.</title>
        <authorList>
            <person name="Kotani H."/>
            <person name="Nakamura Y."/>
            <person name="Sato S."/>
            <person name="Asamizu E."/>
            <person name="Kaneko T."/>
            <person name="Miyajima N."/>
            <person name="Tabata S."/>
        </authorList>
    </citation>
    <scope>NUCLEOTIDE SEQUENCE [LARGE SCALE GENOMIC DNA]</scope>
    <source>
        <strain>cv. Columbia</strain>
    </source>
</reference>
<reference key="2">
    <citation type="journal article" date="2017" name="Plant J.">
        <title>Araport11: a complete reannotation of the Arabidopsis thaliana reference genome.</title>
        <authorList>
            <person name="Cheng C.Y."/>
            <person name="Krishnakumar V."/>
            <person name="Chan A.P."/>
            <person name="Thibaud-Nissen F."/>
            <person name="Schobel S."/>
            <person name="Town C.D."/>
        </authorList>
    </citation>
    <scope>GENOME REANNOTATION</scope>
    <source>
        <strain>cv. Columbia</strain>
    </source>
</reference>
<reference key="3">
    <citation type="journal article" date="2003" name="Science">
        <title>Empirical analysis of transcriptional activity in the Arabidopsis genome.</title>
        <authorList>
            <person name="Yamada K."/>
            <person name="Lim J."/>
            <person name="Dale J.M."/>
            <person name="Chen H."/>
            <person name="Shinn P."/>
            <person name="Palm C.J."/>
            <person name="Southwick A.M."/>
            <person name="Wu H.C."/>
            <person name="Kim C.J."/>
            <person name="Nguyen M."/>
            <person name="Pham P.K."/>
            <person name="Cheuk R.F."/>
            <person name="Karlin-Newmann G."/>
            <person name="Liu S.X."/>
            <person name="Lam B."/>
            <person name="Sakano H."/>
            <person name="Wu T."/>
            <person name="Yu G."/>
            <person name="Miranda M."/>
            <person name="Quach H.L."/>
            <person name="Tripp M."/>
            <person name="Chang C.H."/>
            <person name="Lee J.M."/>
            <person name="Toriumi M.J."/>
            <person name="Chan M.M."/>
            <person name="Tang C.C."/>
            <person name="Onodera C.S."/>
            <person name="Deng J.M."/>
            <person name="Akiyama K."/>
            <person name="Ansari Y."/>
            <person name="Arakawa T."/>
            <person name="Banh J."/>
            <person name="Banno F."/>
            <person name="Bowser L."/>
            <person name="Brooks S.Y."/>
            <person name="Carninci P."/>
            <person name="Chao Q."/>
            <person name="Choy N."/>
            <person name="Enju A."/>
            <person name="Goldsmith A.D."/>
            <person name="Gurjal M."/>
            <person name="Hansen N.F."/>
            <person name="Hayashizaki Y."/>
            <person name="Johnson-Hopson C."/>
            <person name="Hsuan V.W."/>
            <person name="Iida K."/>
            <person name="Karnes M."/>
            <person name="Khan S."/>
            <person name="Koesema E."/>
            <person name="Ishida J."/>
            <person name="Jiang P.X."/>
            <person name="Jones T."/>
            <person name="Kawai J."/>
            <person name="Kamiya A."/>
            <person name="Meyers C."/>
            <person name="Nakajima M."/>
            <person name="Narusaka M."/>
            <person name="Seki M."/>
            <person name="Sakurai T."/>
            <person name="Satou M."/>
            <person name="Tamse R."/>
            <person name="Vaysberg M."/>
            <person name="Wallender E.K."/>
            <person name="Wong C."/>
            <person name="Yamamura Y."/>
            <person name="Yuan S."/>
            <person name="Shinozaki K."/>
            <person name="Davis R.W."/>
            <person name="Theologis A."/>
            <person name="Ecker J.R."/>
        </authorList>
    </citation>
    <scope>NUCLEOTIDE SEQUENCE [LARGE SCALE MRNA]</scope>
    <source>
        <strain>cv. Columbia</strain>
    </source>
</reference>
<reference key="4">
    <citation type="submission" date="2004-10" db="EMBL/GenBank/DDBJ databases">
        <title>Arabidopsis ORF clones.</title>
        <authorList>
            <person name="Shinn P."/>
            <person name="Chen H."/>
            <person name="Cheuk R."/>
            <person name="Kim C.J."/>
            <person name="Ecker J.R."/>
        </authorList>
    </citation>
    <scope>NUCLEOTIDE SEQUENCE [LARGE SCALE MRNA]</scope>
</reference>
<reference key="5">
    <citation type="journal article" date="2002" name="Trends Plant Sci.">
        <title>The Dof family of plant transcription factors.</title>
        <authorList>
            <person name="Yanagisawa S."/>
        </authorList>
    </citation>
    <scope>GENE FAMILY</scope>
    <scope>NOMENCLATURE</scope>
</reference>
<reference key="6">
    <citation type="journal article" date="2005" name="Science">
        <title>FKF1 F-box protein mediates cyclic degradation of a repressor of CONSTANS in Arabidopsis.</title>
        <authorList>
            <person name="Imaizumi T."/>
            <person name="Schultz T.F."/>
            <person name="Harmon F.G."/>
            <person name="Ho L.A."/>
            <person name="Kay S.A."/>
        </authorList>
    </citation>
    <scope>INTERACTION WITH ADO2 AND ADO3</scope>
</reference>
<reference key="7">
    <citation type="journal article" date="2009" name="Dev. Cell">
        <title>Arabidopsis DOF transcription factors act redundantly to reduce CONSTANS expression and are essential for a photoperiodic flowering response.</title>
        <authorList>
            <person name="Fornara F."/>
            <person name="Panigrahi K.C."/>
            <person name="Gissot L."/>
            <person name="Sauerbrunn N."/>
            <person name="Ruehl M."/>
            <person name="Jarillo J.A."/>
            <person name="Coupland G."/>
        </authorList>
    </citation>
    <scope>FUNCTION</scope>
    <scope>TISSUE SPECIFICITY</scope>
    <scope>INDUCTION</scope>
    <scope>DISRUPTION PHENOTYPE</scope>
</reference>
<comment type="function">
    <text evidence="1 5">Transcription factor that binds specifically to a 5'-AA[AG]G-3' consensus core sequence (By similarity). Regulates a photoperiodic flowering response. Transcriptional repressor of 'CONSTANS' expression. The stability of CDF2 is controlled by 'GIGANTEA' and redundantly by ADO3, ADO2 and/or ADO1.</text>
</comment>
<comment type="subunit">
    <text evidence="4">Interacts with ADO2 (via kelch repeats) and ADO3 (via kelch repeats).</text>
</comment>
<comment type="interaction">
    <interactant intactId="EBI-1536103">
        <id>Q93ZL5</id>
    </interactant>
    <interactant intactId="EBI-1015688">
        <id>Q8W420</id>
        <label>ADO2</label>
    </interactant>
    <organismsDiffer>false</organismsDiffer>
    <experiments>3</experiments>
</comment>
<comment type="interaction">
    <interactant intactId="EBI-1536103">
        <id>Q93ZL5</id>
    </interactant>
    <interactant intactId="EBI-401228">
        <id>Q9C9W9</id>
        <label>ADO3</label>
    </interactant>
    <organismsDiffer>false</organismsDiffer>
    <experiments>2</experiments>
</comment>
<comment type="interaction">
    <interactant intactId="EBI-1536103">
        <id>Q93ZL5</id>
    </interactant>
    <interactant intactId="EBI-9838721">
        <id>O64647</id>
        <label>TCP9</label>
    </interactant>
    <organismsDiffer>false</organismsDiffer>
    <experiments>3</experiments>
</comment>
<comment type="subcellular location">
    <subcellularLocation>
        <location evidence="6">Nucleus</location>
    </subcellularLocation>
</comment>
<comment type="tissue specificity">
    <text evidence="5">Expressed in the vasculature of cotyledons and hypocotyls, leaves and roots.</text>
</comment>
<comment type="induction">
    <text evidence="5">Circadian-regulation. Highly expressed at the beginning of the light period, then decreases, reaching a minimum between 16 and 29 hours after dawn before rising again at the end of the day. Regulated at the protein level by ADO3 and GI pos-transcriptionally.</text>
</comment>
<comment type="disruption phenotype">
    <text evidence="5">Early flowering.</text>
</comment>
<comment type="sequence caution" evidence="6">
    <conflict type="erroneous gene model prediction">
        <sequence resource="EMBL-CDS" id="BAB08898"/>
    </conflict>
</comment>
<name>CDF2_ARATH</name>
<accession>Q93ZL5</accession>
<accession>Q5XF25</accession>
<accession>Q9FK95</accession>
<sequence length="457" mass="49808">MADPAIKLFGKTIPLPELGVVDSSSSYTGFLTETQIPVRLSDSCTGDDDDEEMGDSGLGREEGDDVGDGGGESETDKKEEKDSECQEESLRNESNDVTTTTSGITEKTETTKAAKTNEESGGTACSQEGKLKKPDKILPCPRCNSMETKFCYYNNYNVNQPRHFCKKCQRYWTAGGTMRNVPVGAGRRKNKSPASHYNRHVSITSAEAMQKVARTDLQHPNGANLLTFGSDSVLCESMASGLNLVEKSLLKTQTVLQEPNEGLKITVPLNQTNEEAGTVSPLPKVPCFPGPPPTWPYAWNGVSWTILPFYPPPAYWSCPGVSPGAWNSFTWMPQPNSPSGSNPNSPTLGKHSRDENAAEPGTAFDETESLGREKSKPERCLWVPKTLRIDDPEEAAKSSIWETLGIKKDENADTFGAFRSSTKEKSSLSEGRLPGRRPELQANPAALSRSANFHESS</sequence>
<protein>
    <recommendedName>
        <fullName>Cyclic dof factor 2</fullName>
    </recommendedName>
    <alternativeName>
        <fullName>Dof zinc finger protein DOF5.2</fullName>
        <shortName>AtDOF5.2</shortName>
    </alternativeName>
</protein>
<proteinExistence type="evidence at protein level"/>
<keyword id="KW-0238">DNA-binding</keyword>
<keyword id="KW-0287">Flowering</keyword>
<keyword id="KW-0479">Metal-binding</keyword>
<keyword id="KW-0539">Nucleus</keyword>
<keyword id="KW-1185">Reference proteome</keyword>
<keyword id="KW-0804">Transcription</keyword>
<keyword id="KW-0805">Transcription regulation</keyword>
<keyword id="KW-0862">Zinc</keyword>
<keyword id="KW-0863">Zinc-finger</keyword>
<organism>
    <name type="scientific">Arabidopsis thaliana</name>
    <name type="common">Mouse-ear cress</name>
    <dbReference type="NCBI Taxonomy" id="3702"/>
    <lineage>
        <taxon>Eukaryota</taxon>
        <taxon>Viridiplantae</taxon>
        <taxon>Streptophyta</taxon>
        <taxon>Embryophyta</taxon>
        <taxon>Tracheophyta</taxon>
        <taxon>Spermatophyta</taxon>
        <taxon>Magnoliopsida</taxon>
        <taxon>eudicotyledons</taxon>
        <taxon>Gunneridae</taxon>
        <taxon>Pentapetalae</taxon>
        <taxon>rosids</taxon>
        <taxon>malvids</taxon>
        <taxon>Brassicales</taxon>
        <taxon>Brassicaceae</taxon>
        <taxon>Camelineae</taxon>
        <taxon>Arabidopsis</taxon>
    </lineage>
</organism>
<gene>
    <name type="primary">CDF2</name>
    <name type="synonym">DOF5.2</name>
    <name type="ordered locus">At5g39660</name>
    <name type="ORF">MIJ24.16</name>
</gene>